<reference key="1">
    <citation type="journal article" date="2008" name="PLoS ONE">
        <title>Genome sequence of Brucella abortus vaccine strain S19 compared to virulent strains yields candidate virulence genes.</title>
        <authorList>
            <person name="Crasta O.R."/>
            <person name="Folkerts O."/>
            <person name="Fei Z."/>
            <person name="Mane S.P."/>
            <person name="Evans C."/>
            <person name="Martino-Catt S."/>
            <person name="Bricker B."/>
            <person name="Yu G."/>
            <person name="Du L."/>
            <person name="Sobral B.W."/>
        </authorList>
    </citation>
    <scope>NUCLEOTIDE SEQUENCE [LARGE SCALE GENOMIC DNA]</scope>
    <source>
        <strain>S19</strain>
    </source>
</reference>
<feature type="chain" id="PRO_1000089491" description="Ribosome maturation factor RimM">
    <location>
        <begin position="1"/>
        <end position="189"/>
    </location>
</feature>
<feature type="domain" description="PRC barrel" evidence="1">
    <location>
        <begin position="95"/>
        <end position="169"/>
    </location>
</feature>
<feature type="region of interest" description="Disordered" evidence="2">
    <location>
        <begin position="168"/>
        <end position="189"/>
    </location>
</feature>
<feature type="compositionally biased region" description="Basic and acidic residues" evidence="2">
    <location>
        <begin position="172"/>
        <end position="189"/>
    </location>
</feature>
<sequence>MPRPENPIQLAVIGAAHGTRGEVRVKTFTGDPLAIADYGLLYDEQGKAYEILEARVAKTVVIVRFKGVNDRNAAEALNGTELFIDRSQLPDEELDEDEFFQTDLIGLEAVDGDGKSYGVVSAIFDFGGGDLIELSEKGKRPMLIPFTEAAVPEIDFDKGIIKVEPHAAGLIADEHDNPPHESGKKPKKP</sequence>
<evidence type="ECO:0000255" key="1">
    <source>
        <dbReference type="HAMAP-Rule" id="MF_00014"/>
    </source>
</evidence>
<evidence type="ECO:0000256" key="2">
    <source>
        <dbReference type="SAM" id="MobiDB-lite"/>
    </source>
</evidence>
<organism>
    <name type="scientific">Brucella abortus (strain S19)</name>
    <dbReference type="NCBI Taxonomy" id="430066"/>
    <lineage>
        <taxon>Bacteria</taxon>
        <taxon>Pseudomonadati</taxon>
        <taxon>Pseudomonadota</taxon>
        <taxon>Alphaproteobacteria</taxon>
        <taxon>Hyphomicrobiales</taxon>
        <taxon>Brucellaceae</taxon>
        <taxon>Brucella/Ochrobactrum group</taxon>
        <taxon>Brucella</taxon>
    </lineage>
</organism>
<dbReference type="EMBL" id="CP000887">
    <property type="protein sequence ID" value="ACD73278.1"/>
    <property type="molecule type" value="Genomic_DNA"/>
</dbReference>
<dbReference type="RefSeq" id="WP_002964983.1">
    <property type="nucleotide sequence ID" value="NC_010742.1"/>
</dbReference>
<dbReference type="SMR" id="B2S869"/>
<dbReference type="GeneID" id="93017753"/>
<dbReference type="KEGG" id="bmc:BAbS19_I17960"/>
<dbReference type="HOGENOM" id="CLU_077636_0_1_5"/>
<dbReference type="Proteomes" id="UP000002565">
    <property type="component" value="Chromosome 1"/>
</dbReference>
<dbReference type="GO" id="GO:0005737">
    <property type="term" value="C:cytoplasm"/>
    <property type="evidence" value="ECO:0007669"/>
    <property type="project" value="UniProtKB-SubCell"/>
</dbReference>
<dbReference type="GO" id="GO:0005840">
    <property type="term" value="C:ribosome"/>
    <property type="evidence" value="ECO:0007669"/>
    <property type="project" value="InterPro"/>
</dbReference>
<dbReference type="GO" id="GO:0043022">
    <property type="term" value="F:ribosome binding"/>
    <property type="evidence" value="ECO:0007669"/>
    <property type="project" value="InterPro"/>
</dbReference>
<dbReference type="GO" id="GO:0042274">
    <property type="term" value="P:ribosomal small subunit biogenesis"/>
    <property type="evidence" value="ECO:0007669"/>
    <property type="project" value="UniProtKB-UniRule"/>
</dbReference>
<dbReference type="GO" id="GO:0006364">
    <property type="term" value="P:rRNA processing"/>
    <property type="evidence" value="ECO:0007669"/>
    <property type="project" value="UniProtKB-UniRule"/>
</dbReference>
<dbReference type="Gene3D" id="2.30.30.240">
    <property type="entry name" value="PRC-barrel domain"/>
    <property type="match status" value="1"/>
</dbReference>
<dbReference type="Gene3D" id="2.40.30.60">
    <property type="entry name" value="RimM"/>
    <property type="match status" value="1"/>
</dbReference>
<dbReference type="HAMAP" id="MF_00014">
    <property type="entry name" value="Ribosome_mat_RimM"/>
    <property type="match status" value="1"/>
</dbReference>
<dbReference type="InterPro" id="IPR011033">
    <property type="entry name" value="PRC_barrel-like_sf"/>
</dbReference>
<dbReference type="InterPro" id="IPR056792">
    <property type="entry name" value="PRC_RimM"/>
</dbReference>
<dbReference type="InterPro" id="IPR011961">
    <property type="entry name" value="RimM"/>
</dbReference>
<dbReference type="InterPro" id="IPR002676">
    <property type="entry name" value="RimM_N"/>
</dbReference>
<dbReference type="InterPro" id="IPR036976">
    <property type="entry name" value="RimM_N_sf"/>
</dbReference>
<dbReference type="InterPro" id="IPR009000">
    <property type="entry name" value="Transl_B-barrel_sf"/>
</dbReference>
<dbReference type="NCBIfam" id="TIGR02273">
    <property type="entry name" value="16S_RimM"/>
    <property type="match status" value="1"/>
</dbReference>
<dbReference type="PANTHER" id="PTHR33692">
    <property type="entry name" value="RIBOSOME MATURATION FACTOR RIMM"/>
    <property type="match status" value="1"/>
</dbReference>
<dbReference type="PANTHER" id="PTHR33692:SF1">
    <property type="entry name" value="RIBOSOME MATURATION FACTOR RIMM"/>
    <property type="match status" value="1"/>
</dbReference>
<dbReference type="Pfam" id="PF24986">
    <property type="entry name" value="PRC_RimM"/>
    <property type="match status" value="1"/>
</dbReference>
<dbReference type="Pfam" id="PF01782">
    <property type="entry name" value="RimM"/>
    <property type="match status" value="1"/>
</dbReference>
<dbReference type="SUPFAM" id="SSF50346">
    <property type="entry name" value="PRC-barrel domain"/>
    <property type="match status" value="1"/>
</dbReference>
<dbReference type="SUPFAM" id="SSF50447">
    <property type="entry name" value="Translation proteins"/>
    <property type="match status" value="1"/>
</dbReference>
<name>RIMM_BRUA1</name>
<accession>B2S869</accession>
<gene>
    <name evidence="1" type="primary">rimM</name>
    <name type="ordered locus">BAbS19_I17960</name>
</gene>
<protein>
    <recommendedName>
        <fullName evidence="1">Ribosome maturation factor RimM</fullName>
    </recommendedName>
</protein>
<comment type="function">
    <text evidence="1">An accessory protein needed during the final step in the assembly of 30S ribosomal subunit, possibly for assembly of the head region. Essential for efficient processing of 16S rRNA. May be needed both before and after RbfA during the maturation of 16S rRNA. It has affinity for free ribosomal 30S subunits but not for 70S ribosomes.</text>
</comment>
<comment type="subunit">
    <text evidence="1">Binds ribosomal protein uS19.</text>
</comment>
<comment type="subcellular location">
    <subcellularLocation>
        <location evidence="1">Cytoplasm</location>
    </subcellularLocation>
</comment>
<comment type="domain">
    <text evidence="1">The PRC barrel domain binds ribosomal protein uS19.</text>
</comment>
<comment type="similarity">
    <text evidence="1">Belongs to the RimM family.</text>
</comment>
<proteinExistence type="inferred from homology"/>
<keyword id="KW-0143">Chaperone</keyword>
<keyword id="KW-0963">Cytoplasm</keyword>
<keyword id="KW-0690">Ribosome biogenesis</keyword>
<keyword id="KW-0698">rRNA processing</keyword>